<sequence length="146" mass="15382">MSVIVAKINLLMEAGKAVPGPKIASVLGPRGIPVPKFCEAFNKVTSAANANYKVGDLVTVRISIKDDRSHDFTVSGPPVAYLLKQEAKLSKSSGNPGKELVAKLPMSAIIKVAKCKMVDMKVDNEDSAVKMVVGTAKSMGIEVVEG</sequence>
<dbReference type="EMBL" id="AE017196">
    <property type="protein sequence ID" value="AAS13787.1"/>
    <property type="molecule type" value="Genomic_DNA"/>
</dbReference>
<dbReference type="RefSeq" id="WP_006279541.1">
    <property type="nucleotide sequence ID" value="NZ_OX384529.1"/>
</dbReference>
<dbReference type="SMR" id="P62444"/>
<dbReference type="EnsemblBacteria" id="AAS13787">
    <property type="protein sequence ID" value="AAS13787"/>
    <property type="gene ID" value="WD_0020"/>
</dbReference>
<dbReference type="KEGG" id="wol:WD_0020"/>
<dbReference type="eggNOG" id="COG0080">
    <property type="taxonomic scope" value="Bacteria"/>
</dbReference>
<dbReference type="Proteomes" id="UP000008215">
    <property type="component" value="Chromosome"/>
</dbReference>
<dbReference type="GO" id="GO:0015934">
    <property type="term" value="C:large ribosomal subunit"/>
    <property type="evidence" value="ECO:0007669"/>
    <property type="project" value="TreeGrafter"/>
</dbReference>
<dbReference type="GO" id="GO:0070180">
    <property type="term" value="F:large ribosomal subunit rRNA binding"/>
    <property type="evidence" value="ECO:0007669"/>
    <property type="project" value="UniProtKB-UniRule"/>
</dbReference>
<dbReference type="GO" id="GO:0003735">
    <property type="term" value="F:structural constituent of ribosome"/>
    <property type="evidence" value="ECO:0007669"/>
    <property type="project" value="InterPro"/>
</dbReference>
<dbReference type="GO" id="GO:0006412">
    <property type="term" value="P:translation"/>
    <property type="evidence" value="ECO:0007669"/>
    <property type="project" value="UniProtKB-UniRule"/>
</dbReference>
<dbReference type="CDD" id="cd00349">
    <property type="entry name" value="Ribosomal_L11"/>
    <property type="match status" value="1"/>
</dbReference>
<dbReference type="Gene3D" id="1.10.10.250">
    <property type="entry name" value="Ribosomal protein L11, C-terminal domain"/>
    <property type="match status" value="1"/>
</dbReference>
<dbReference type="Gene3D" id="3.30.1550.10">
    <property type="entry name" value="Ribosomal protein L11/L12, N-terminal domain"/>
    <property type="match status" value="1"/>
</dbReference>
<dbReference type="HAMAP" id="MF_00736">
    <property type="entry name" value="Ribosomal_uL11"/>
    <property type="match status" value="1"/>
</dbReference>
<dbReference type="InterPro" id="IPR000911">
    <property type="entry name" value="Ribosomal_uL11"/>
</dbReference>
<dbReference type="InterPro" id="IPR020783">
    <property type="entry name" value="Ribosomal_uL11_C"/>
</dbReference>
<dbReference type="InterPro" id="IPR036769">
    <property type="entry name" value="Ribosomal_uL11_C_sf"/>
</dbReference>
<dbReference type="InterPro" id="IPR020785">
    <property type="entry name" value="Ribosomal_uL11_CS"/>
</dbReference>
<dbReference type="InterPro" id="IPR020784">
    <property type="entry name" value="Ribosomal_uL11_N"/>
</dbReference>
<dbReference type="InterPro" id="IPR036796">
    <property type="entry name" value="Ribosomal_uL11_N_sf"/>
</dbReference>
<dbReference type="PANTHER" id="PTHR11661">
    <property type="entry name" value="60S RIBOSOMAL PROTEIN L12"/>
    <property type="match status" value="1"/>
</dbReference>
<dbReference type="PANTHER" id="PTHR11661:SF1">
    <property type="entry name" value="LARGE RIBOSOMAL SUBUNIT PROTEIN UL11M"/>
    <property type="match status" value="1"/>
</dbReference>
<dbReference type="Pfam" id="PF00298">
    <property type="entry name" value="Ribosomal_L11"/>
    <property type="match status" value="1"/>
</dbReference>
<dbReference type="Pfam" id="PF03946">
    <property type="entry name" value="Ribosomal_L11_N"/>
    <property type="match status" value="1"/>
</dbReference>
<dbReference type="SMART" id="SM00649">
    <property type="entry name" value="RL11"/>
    <property type="match status" value="1"/>
</dbReference>
<dbReference type="SUPFAM" id="SSF54747">
    <property type="entry name" value="Ribosomal L11/L12e N-terminal domain"/>
    <property type="match status" value="1"/>
</dbReference>
<dbReference type="SUPFAM" id="SSF46906">
    <property type="entry name" value="Ribosomal protein L11, C-terminal domain"/>
    <property type="match status" value="1"/>
</dbReference>
<dbReference type="PROSITE" id="PS00359">
    <property type="entry name" value="RIBOSOMAL_L11"/>
    <property type="match status" value="1"/>
</dbReference>
<gene>
    <name evidence="1" type="primary">rplK</name>
    <name type="ordered locus">WD_0020</name>
</gene>
<proteinExistence type="inferred from homology"/>
<keyword id="KW-0488">Methylation</keyword>
<keyword id="KW-0687">Ribonucleoprotein</keyword>
<keyword id="KW-0689">Ribosomal protein</keyword>
<keyword id="KW-0694">RNA-binding</keyword>
<keyword id="KW-0699">rRNA-binding</keyword>
<reference key="1">
    <citation type="journal article" date="2004" name="PLoS Biol.">
        <title>Phylogenomics of the reproductive parasite Wolbachia pipientis wMel: a streamlined genome overrun by mobile genetic elements.</title>
        <authorList>
            <person name="Wu M."/>
            <person name="Sun L.V."/>
            <person name="Vamathevan J.J."/>
            <person name="Riegler M."/>
            <person name="DeBoy R.T."/>
            <person name="Brownlie J.C."/>
            <person name="McGraw E.A."/>
            <person name="Martin W."/>
            <person name="Esser C."/>
            <person name="Ahmadinejad N."/>
            <person name="Wiegand C."/>
            <person name="Madupu R."/>
            <person name="Beanan M.J."/>
            <person name="Brinkac L.M."/>
            <person name="Daugherty S.C."/>
            <person name="Durkin A.S."/>
            <person name="Kolonay J.F."/>
            <person name="Nelson W.C."/>
            <person name="Mohamoud Y."/>
            <person name="Lee P."/>
            <person name="Berry K.J."/>
            <person name="Young M.B."/>
            <person name="Utterback T.R."/>
            <person name="Weidman J.F."/>
            <person name="Nierman W.C."/>
            <person name="Paulsen I.T."/>
            <person name="Nelson K.E."/>
            <person name="Tettelin H."/>
            <person name="O'Neill S.L."/>
            <person name="Eisen J.A."/>
        </authorList>
    </citation>
    <scope>NUCLEOTIDE SEQUENCE [LARGE SCALE GENOMIC DNA]</scope>
</reference>
<evidence type="ECO:0000255" key="1">
    <source>
        <dbReference type="HAMAP-Rule" id="MF_00736"/>
    </source>
</evidence>
<evidence type="ECO:0000305" key="2"/>
<organism>
    <name type="scientific">Wolbachia pipientis wMel</name>
    <dbReference type="NCBI Taxonomy" id="163164"/>
    <lineage>
        <taxon>Bacteria</taxon>
        <taxon>Pseudomonadati</taxon>
        <taxon>Pseudomonadota</taxon>
        <taxon>Alphaproteobacteria</taxon>
        <taxon>Rickettsiales</taxon>
        <taxon>Anaplasmataceae</taxon>
        <taxon>Wolbachieae</taxon>
        <taxon>Wolbachia</taxon>
    </lineage>
</organism>
<name>RL11_WOLPM</name>
<accession>P62444</accession>
<feature type="chain" id="PRO_0000104412" description="Large ribosomal subunit protein uL11">
    <location>
        <begin position="1"/>
        <end position="146"/>
    </location>
</feature>
<comment type="function">
    <text evidence="1">Forms part of the ribosomal stalk which helps the ribosome interact with GTP-bound translation factors.</text>
</comment>
<comment type="subunit">
    <text evidence="1">Part of the ribosomal stalk of the 50S ribosomal subunit. Interacts with L10 and the large rRNA to form the base of the stalk. L10 forms an elongated spine to which L12 dimers bind in a sequential fashion forming a multimeric L10(L12)X complex.</text>
</comment>
<comment type="PTM">
    <text evidence="1">One or more lysine residues are methylated.</text>
</comment>
<comment type="similarity">
    <text evidence="1">Belongs to the universal ribosomal protein uL11 family.</text>
</comment>
<protein>
    <recommendedName>
        <fullName evidence="1">Large ribosomal subunit protein uL11</fullName>
    </recommendedName>
    <alternativeName>
        <fullName evidence="2">50S ribosomal protein L11</fullName>
    </alternativeName>
</protein>